<sequence length="142" mass="16094">MAPGRRVERVAALIRRETSELLIHGIRDERVHQGMVSITNVEVSGDLQHCKIFVSIYGEEIQRSEVLEGLEAASGFLRGELGRRLQMRRAPEVHFHLDRGIEKGTSVLNLLEQLEQQRETLGEVQSESDQPTTYETTTVNKT</sequence>
<evidence type="ECO:0000255" key="1">
    <source>
        <dbReference type="HAMAP-Rule" id="MF_00003"/>
    </source>
</evidence>
<evidence type="ECO:0000256" key="2">
    <source>
        <dbReference type="SAM" id="MobiDB-lite"/>
    </source>
</evidence>
<organism>
    <name type="scientific">Prochlorococcus marinus (strain MIT 9313)</name>
    <dbReference type="NCBI Taxonomy" id="74547"/>
    <lineage>
        <taxon>Bacteria</taxon>
        <taxon>Bacillati</taxon>
        <taxon>Cyanobacteriota</taxon>
        <taxon>Cyanophyceae</taxon>
        <taxon>Synechococcales</taxon>
        <taxon>Prochlorococcaceae</taxon>
        <taxon>Prochlorococcus</taxon>
    </lineage>
</organism>
<reference key="1">
    <citation type="journal article" date="2003" name="Nature">
        <title>Genome divergence in two Prochlorococcus ecotypes reflects oceanic niche differentiation.</title>
        <authorList>
            <person name="Rocap G."/>
            <person name="Larimer F.W."/>
            <person name="Lamerdin J.E."/>
            <person name="Malfatti S."/>
            <person name="Chain P."/>
            <person name="Ahlgren N.A."/>
            <person name="Arellano A."/>
            <person name="Coleman M."/>
            <person name="Hauser L."/>
            <person name="Hess W.R."/>
            <person name="Johnson Z.I."/>
            <person name="Land M.L."/>
            <person name="Lindell D."/>
            <person name="Post A.F."/>
            <person name="Regala W."/>
            <person name="Shah M."/>
            <person name="Shaw S.L."/>
            <person name="Steglich C."/>
            <person name="Sullivan M.B."/>
            <person name="Ting C.S."/>
            <person name="Tolonen A."/>
            <person name="Webb E.A."/>
            <person name="Zinser E.R."/>
            <person name="Chisholm S.W."/>
        </authorList>
    </citation>
    <scope>NUCLEOTIDE SEQUENCE [LARGE SCALE GENOMIC DNA]</scope>
    <source>
        <strain>MIT 9313</strain>
    </source>
</reference>
<dbReference type="EMBL" id="BX548175">
    <property type="protein sequence ID" value="CAE22137.1"/>
    <property type="molecule type" value="Genomic_DNA"/>
</dbReference>
<dbReference type="RefSeq" id="WP_011131328.1">
    <property type="nucleotide sequence ID" value="NC_005071.1"/>
</dbReference>
<dbReference type="SMR" id="Q7V4I8"/>
<dbReference type="KEGG" id="pmt:PMT_1963"/>
<dbReference type="eggNOG" id="COG0858">
    <property type="taxonomic scope" value="Bacteria"/>
</dbReference>
<dbReference type="HOGENOM" id="CLU_089475_2_1_3"/>
<dbReference type="OrthoDB" id="307788at2"/>
<dbReference type="Proteomes" id="UP000001423">
    <property type="component" value="Chromosome"/>
</dbReference>
<dbReference type="GO" id="GO:0005829">
    <property type="term" value="C:cytosol"/>
    <property type="evidence" value="ECO:0007669"/>
    <property type="project" value="TreeGrafter"/>
</dbReference>
<dbReference type="GO" id="GO:0043024">
    <property type="term" value="F:ribosomal small subunit binding"/>
    <property type="evidence" value="ECO:0007669"/>
    <property type="project" value="TreeGrafter"/>
</dbReference>
<dbReference type="GO" id="GO:0030490">
    <property type="term" value="P:maturation of SSU-rRNA"/>
    <property type="evidence" value="ECO:0007669"/>
    <property type="project" value="UniProtKB-UniRule"/>
</dbReference>
<dbReference type="Gene3D" id="3.30.300.20">
    <property type="match status" value="1"/>
</dbReference>
<dbReference type="HAMAP" id="MF_00003">
    <property type="entry name" value="RbfA"/>
    <property type="match status" value="1"/>
</dbReference>
<dbReference type="InterPro" id="IPR015946">
    <property type="entry name" value="KH_dom-like_a/b"/>
</dbReference>
<dbReference type="InterPro" id="IPR000238">
    <property type="entry name" value="RbfA"/>
</dbReference>
<dbReference type="InterPro" id="IPR023799">
    <property type="entry name" value="RbfA_dom_sf"/>
</dbReference>
<dbReference type="InterPro" id="IPR020053">
    <property type="entry name" value="Ribosome-bd_factorA_CS"/>
</dbReference>
<dbReference type="NCBIfam" id="TIGR00082">
    <property type="entry name" value="rbfA"/>
    <property type="match status" value="1"/>
</dbReference>
<dbReference type="PANTHER" id="PTHR33515">
    <property type="entry name" value="RIBOSOME-BINDING FACTOR A, CHLOROPLASTIC-RELATED"/>
    <property type="match status" value="1"/>
</dbReference>
<dbReference type="PANTHER" id="PTHR33515:SF1">
    <property type="entry name" value="RIBOSOME-BINDING FACTOR A, CHLOROPLASTIC-RELATED"/>
    <property type="match status" value="1"/>
</dbReference>
<dbReference type="Pfam" id="PF02033">
    <property type="entry name" value="RBFA"/>
    <property type="match status" value="1"/>
</dbReference>
<dbReference type="SUPFAM" id="SSF89919">
    <property type="entry name" value="Ribosome-binding factor A, RbfA"/>
    <property type="match status" value="1"/>
</dbReference>
<dbReference type="PROSITE" id="PS01319">
    <property type="entry name" value="RBFA"/>
    <property type="match status" value="1"/>
</dbReference>
<name>RBFA_PROMM</name>
<gene>
    <name evidence="1" type="primary">rbfA</name>
    <name type="ordered locus">PMT_1963</name>
</gene>
<comment type="function">
    <text evidence="1">One of several proteins that assist in the late maturation steps of the functional core of the 30S ribosomal subunit. Associates with free 30S ribosomal subunits (but not with 30S subunits that are part of 70S ribosomes or polysomes). Required for efficient processing of 16S rRNA. May interact with the 5'-terminal helix region of 16S rRNA.</text>
</comment>
<comment type="subunit">
    <text evidence="1">Monomer. Binds 30S ribosomal subunits, but not 50S ribosomal subunits or 70S ribosomes.</text>
</comment>
<comment type="subcellular location">
    <subcellularLocation>
        <location evidence="1">Cytoplasm</location>
    </subcellularLocation>
</comment>
<comment type="similarity">
    <text evidence="1">Belongs to the RbfA family.</text>
</comment>
<proteinExistence type="inferred from homology"/>
<feature type="chain" id="PRO_0000102711" description="Ribosome-binding factor A">
    <location>
        <begin position="1"/>
        <end position="142"/>
    </location>
</feature>
<feature type="region of interest" description="Disordered" evidence="2">
    <location>
        <begin position="120"/>
        <end position="142"/>
    </location>
</feature>
<feature type="compositionally biased region" description="Polar residues" evidence="2">
    <location>
        <begin position="123"/>
        <end position="142"/>
    </location>
</feature>
<accession>Q7V4I8</accession>
<keyword id="KW-0963">Cytoplasm</keyword>
<keyword id="KW-1185">Reference proteome</keyword>
<keyword id="KW-0690">Ribosome biogenesis</keyword>
<protein>
    <recommendedName>
        <fullName evidence="1">Ribosome-binding factor A</fullName>
    </recommendedName>
</protein>